<gene>
    <name evidence="1" type="primary">rpsG</name>
    <name type="ordered locus">SeD_A3815</name>
</gene>
<sequence>MPRRRVIGQRKILPDPKFGSELLAKFVNILMVDGKKSTAESIVYSALETLAQRSGKSELEAFEVALENVRPTVEVKSRRVGGSTYQVPVEVRPVRRNALAMRWIVEAARKRGDKSMALRLANELSDAAENKGTAVKKREDVHRMAEANKAFAHYRW</sequence>
<comment type="function">
    <text evidence="1">One of the primary rRNA binding proteins, it binds directly to 16S rRNA where it nucleates assembly of the head domain of the 30S subunit. Is located at the subunit interface close to the decoding center, probably blocks exit of the E-site tRNA.</text>
</comment>
<comment type="subunit">
    <text evidence="1">Part of the 30S ribosomal subunit. Contacts proteins S9 and S11.</text>
</comment>
<comment type="similarity">
    <text evidence="1">Belongs to the universal ribosomal protein uS7 family.</text>
</comment>
<name>RS7_SALDC</name>
<reference key="1">
    <citation type="journal article" date="2011" name="J. Bacteriol.">
        <title>Comparative genomics of 28 Salmonella enterica isolates: evidence for CRISPR-mediated adaptive sublineage evolution.</title>
        <authorList>
            <person name="Fricke W.F."/>
            <person name="Mammel M.K."/>
            <person name="McDermott P.F."/>
            <person name="Tartera C."/>
            <person name="White D.G."/>
            <person name="Leclerc J.E."/>
            <person name="Ravel J."/>
            <person name="Cebula T.A."/>
        </authorList>
    </citation>
    <scope>NUCLEOTIDE SEQUENCE [LARGE SCALE GENOMIC DNA]</scope>
    <source>
        <strain>CT_02021853</strain>
    </source>
</reference>
<feature type="chain" id="PRO_1000125994" description="Small ribosomal subunit protein uS7">
    <location>
        <begin position="1"/>
        <end position="156"/>
    </location>
</feature>
<protein>
    <recommendedName>
        <fullName evidence="1">Small ribosomal subunit protein uS7</fullName>
    </recommendedName>
    <alternativeName>
        <fullName evidence="2">30S ribosomal protein S7</fullName>
    </alternativeName>
</protein>
<evidence type="ECO:0000255" key="1">
    <source>
        <dbReference type="HAMAP-Rule" id="MF_00480"/>
    </source>
</evidence>
<evidence type="ECO:0000305" key="2"/>
<organism>
    <name type="scientific">Salmonella dublin (strain CT_02021853)</name>
    <dbReference type="NCBI Taxonomy" id="439851"/>
    <lineage>
        <taxon>Bacteria</taxon>
        <taxon>Pseudomonadati</taxon>
        <taxon>Pseudomonadota</taxon>
        <taxon>Gammaproteobacteria</taxon>
        <taxon>Enterobacterales</taxon>
        <taxon>Enterobacteriaceae</taxon>
        <taxon>Salmonella</taxon>
    </lineage>
</organism>
<dbReference type="EMBL" id="CP001144">
    <property type="protein sequence ID" value="ACH75451.1"/>
    <property type="molecule type" value="Genomic_DNA"/>
</dbReference>
<dbReference type="RefSeq" id="WP_001138043.1">
    <property type="nucleotide sequence ID" value="NC_011205.1"/>
</dbReference>
<dbReference type="SMR" id="B5FJM1"/>
<dbReference type="GeneID" id="93778657"/>
<dbReference type="KEGG" id="sed:SeD_A3815"/>
<dbReference type="HOGENOM" id="CLU_072226_1_1_6"/>
<dbReference type="Proteomes" id="UP000008322">
    <property type="component" value="Chromosome"/>
</dbReference>
<dbReference type="GO" id="GO:0015935">
    <property type="term" value="C:small ribosomal subunit"/>
    <property type="evidence" value="ECO:0007669"/>
    <property type="project" value="InterPro"/>
</dbReference>
<dbReference type="GO" id="GO:0019843">
    <property type="term" value="F:rRNA binding"/>
    <property type="evidence" value="ECO:0007669"/>
    <property type="project" value="UniProtKB-UniRule"/>
</dbReference>
<dbReference type="GO" id="GO:0003735">
    <property type="term" value="F:structural constituent of ribosome"/>
    <property type="evidence" value="ECO:0007669"/>
    <property type="project" value="InterPro"/>
</dbReference>
<dbReference type="GO" id="GO:0000049">
    <property type="term" value="F:tRNA binding"/>
    <property type="evidence" value="ECO:0007669"/>
    <property type="project" value="UniProtKB-UniRule"/>
</dbReference>
<dbReference type="GO" id="GO:0006412">
    <property type="term" value="P:translation"/>
    <property type="evidence" value="ECO:0007669"/>
    <property type="project" value="UniProtKB-UniRule"/>
</dbReference>
<dbReference type="CDD" id="cd14869">
    <property type="entry name" value="uS7_Bacteria"/>
    <property type="match status" value="1"/>
</dbReference>
<dbReference type="FunFam" id="1.10.455.10:FF:000001">
    <property type="entry name" value="30S ribosomal protein S7"/>
    <property type="match status" value="1"/>
</dbReference>
<dbReference type="Gene3D" id="1.10.455.10">
    <property type="entry name" value="Ribosomal protein S7 domain"/>
    <property type="match status" value="1"/>
</dbReference>
<dbReference type="HAMAP" id="MF_00480_B">
    <property type="entry name" value="Ribosomal_uS7_B"/>
    <property type="match status" value="1"/>
</dbReference>
<dbReference type="InterPro" id="IPR000235">
    <property type="entry name" value="Ribosomal_uS7"/>
</dbReference>
<dbReference type="InterPro" id="IPR005717">
    <property type="entry name" value="Ribosomal_uS7_bac/org-type"/>
</dbReference>
<dbReference type="InterPro" id="IPR020606">
    <property type="entry name" value="Ribosomal_uS7_CS"/>
</dbReference>
<dbReference type="InterPro" id="IPR023798">
    <property type="entry name" value="Ribosomal_uS7_dom"/>
</dbReference>
<dbReference type="InterPro" id="IPR036823">
    <property type="entry name" value="Ribosomal_uS7_dom_sf"/>
</dbReference>
<dbReference type="NCBIfam" id="TIGR01029">
    <property type="entry name" value="rpsG_bact"/>
    <property type="match status" value="1"/>
</dbReference>
<dbReference type="PANTHER" id="PTHR11205">
    <property type="entry name" value="RIBOSOMAL PROTEIN S7"/>
    <property type="match status" value="1"/>
</dbReference>
<dbReference type="Pfam" id="PF00177">
    <property type="entry name" value="Ribosomal_S7"/>
    <property type="match status" value="1"/>
</dbReference>
<dbReference type="PIRSF" id="PIRSF002122">
    <property type="entry name" value="RPS7p_RPS7a_RPS5e_RPS7o"/>
    <property type="match status" value="1"/>
</dbReference>
<dbReference type="SUPFAM" id="SSF47973">
    <property type="entry name" value="Ribosomal protein S7"/>
    <property type="match status" value="1"/>
</dbReference>
<dbReference type="PROSITE" id="PS00052">
    <property type="entry name" value="RIBOSOMAL_S7"/>
    <property type="match status" value="1"/>
</dbReference>
<keyword id="KW-0687">Ribonucleoprotein</keyword>
<keyword id="KW-0689">Ribosomal protein</keyword>
<keyword id="KW-0694">RNA-binding</keyword>
<keyword id="KW-0699">rRNA-binding</keyword>
<keyword id="KW-0820">tRNA-binding</keyword>
<accession>B5FJM1</accession>
<proteinExistence type="inferred from homology"/>